<feature type="signal peptide" description="Tat-type signal" evidence="3">
    <location>
        <begin position="1"/>
        <end position="36"/>
    </location>
</feature>
<feature type="chain" id="PRO_5041061448" description="Hyaluronate lyase HylA" evidence="1 3">
    <location>
        <begin position="37"/>
        <end position="826"/>
    </location>
</feature>
<feature type="region of interest" description="Disordered" evidence="4">
    <location>
        <begin position="800"/>
        <end position="826"/>
    </location>
</feature>
<feature type="active site" evidence="2">
    <location>
        <position position="276"/>
    </location>
</feature>
<feature type="active site" evidence="2 5">
    <location>
        <position position="285"/>
    </location>
</feature>
<feature type="active site" evidence="2">
    <location>
        <position position="339"/>
    </location>
</feature>
<feature type="mutagenesis site" description="No change in hyaluronic acid (HA) degradation end products." evidence="5">
    <original>S</original>
    <variation>E</variation>
    <location>
        <position position="116"/>
    </location>
</feature>
<feature type="mutagenesis site" description="No change in hyaluronic acid (HA) degradation end products." evidence="5">
    <original>S</original>
    <variation>G</variation>
    <location>
        <position position="284"/>
    </location>
</feature>
<feature type="mutagenesis site" description="Loss of catalytic activity." evidence="5">
    <original>Y</original>
    <variation>F</variation>
    <location>
        <position position="285"/>
    </location>
</feature>
<feature type="mutagenesis site" description="No significant effect on catalytic activity." evidence="5">
    <original>D</original>
    <variation>N</variation>
    <location>
        <position position="345"/>
    </location>
</feature>
<feature type="mutagenesis site" description="Reduced catalytic activity, but no change in hyaluronic acid (HA) degradation end products." evidence="5">
    <original>E</original>
    <variation>G</variation>
    <location>
        <position position="346"/>
    </location>
</feature>
<feature type="mutagenesis site" description="Reduced catalytic activity." evidence="5">
    <original>R</original>
    <variation>V</variation>
    <location>
        <position position="397"/>
    </location>
</feature>
<feature type="mutagenesis site" description="Almost complete loss of catalytic activity." evidence="5">
    <original>N</original>
    <variation>D</variation>
    <location>
        <position position="442"/>
    </location>
</feature>
<feature type="mutagenesis site" description="Increased catalytic rate and altered hyaluronic acid (HA) degradation end products with reduced amount of larger HA oligosaccharides." evidence="5">
    <original>S</original>
    <variation>G</variation>
    <location>
        <position position="452"/>
    </location>
</feature>
<comment type="function">
    <text evidence="5">Degrades hyaluronic acid (HA) into large-sized HA oligosaccharides, including tetrasaccharide HA (HA-4), hexasaccharide HA (HA-6) and higher molecular weight HA, and to a lesser extent into HA disaccharides (HA-2). Involved in the pathogenesis of acne. HA degradation products induce secretion of proinflammatory cytokines (IL-6, IL-8 and TNF-alpha) from human HaCaT keratinocyte cell line and from mouse bone marrow derived macrophages (BMDMs). Produced HA fragments also direct robust TLR2-dependent inflammation in the mouse model of acne.</text>
</comment>
<comment type="catalytic activity">
    <reaction evidence="5">
        <text>[hyaluronan](n) = n 3-(4-deoxy-beta-D-gluc-4-enuronosyl)-N-acetyl-D-glucosamine + H2O</text>
        <dbReference type="Rhea" id="RHEA:50240"/>
        <dbReference type="Rhea" id="RHEA-COMP:12583"/>
        <dbReference type="ChEBI" id="CHEBI:15377"/>
        <dbReference type="ChEBI" id="CHEBI:132151"/>
        <dbReference type="ChEBI" id="CHEBI:132153"/>
        <dbReference type="EC" id="4.2.2.1"/>
    </reaction>
</comment>
<comment type="subcellular location">
    <subcellularLocation>
        <location evidence="5">Secreted</location>
    </subcellularLocation>
</comment>
<comment type="PTM">
    <text evidence="3">Predicted to be exported by the Tat system. The position of the signal peptide cleavage has not been experimentally proven.</text>
</comment>
<comment type="disruption phenotype">
    <text evidence="5">Loss of hyaluronic acid (HA)-degrading activity. Dramatic reduction in skin pathology and production of proinflammatory cytokines in the mouse model of acne.</text>
</comment>
<comment type="biotechnology">
    <text evidence="5">Targeting this protein by peptide inhibitors or by vaccination mitigates acne pathology. The developed inhibitors are effective both in vitro blocking the hyaluronic acid (HA) degrading activity and in vivo alleviating acne lesions. The designed protective peptide vaccine combines four epitopes specific to this protein with no significant homology to human proteins.</text>
</comment>
<comment type="similarity">
    <text evidence="7">Belongs to the polysaccharide lyase 8 family.</text>
</comment>
<name>HYLA_CUTAC</name>
<gene>
    <name evidence="6" type="primary">hylA</name>
    <name evidence="8" type="ORF">B1B09_04880</name>
    <name evidence="9" type="ORF">COH10_04915</name>
</gene>
<accession>A0A2B7ICX0</accession>
<proteinExistence type="evidence at protein level"/>
<evidence type="ECO:0000255" key="1"/>
<evidence type="ECO:0000255" key="2">
    <source>
        <dbReference type="PIRSR" id="PIRSR638970-1"/>
    </source>
</evidence>
<evidence type="ECO:0000255" key="3">
    <source>
        <dbReference type="PROSITE-ProRule" id="PRU00648"/>
    </source>
</evidence>
<evidence type="ECO:0000256" key="4">
    <source>
        <dbReference type="SAM" id="MobiDB-lite"/>
    </source>
</evidence>
<evidence type="ECO:0000269" key="5">
    <source>
    </source>
</evidence>
<evidence type="ECO:0000303" key="6">
    <source>
    </source>
</evidence>
<evidence type="ECO:0000305" key="7"/>
<evidence type="ECO:0000312" key="8">
    <source>
        <dbReference type="EMBL" id="PGF34954.1"/>
    </source>
</evidence>
<evidence type="ECO:0000312" key="9">
    <source>
        <dbReference type="EMBL" id="REB09072.1"/>
    </source>
</evidence>
<evidence type="ECO:0000312" key="10">
    <source>
        <dbReference type="Proteomes" id="UP000226191"/>
    </source>
</evidence>
<evidence type="ECO:0007744" key="11">
    <source>
        <dbReference type="PDB" id="8FYG"/>
    </source>
</evidence>
<organism evidence="8">
    <name type="scientific">Cutibacterium acnes</name>
    <name type="common">Propionibacterium acnes</name>
    <dbReference type="NCBI Taxonomy" id="1747"/>
    <lineage>
        <taxon>Bacteria</taxon>
        <taxon>Bacillati</taxon>
        <taxon>Actinomycetota</taxon>
        <taxon>Actinomycetes</taxon>
        <taxon>Propionibacteriales</taxon>
        <taxon>Propionibacteriaceae</taxon>
        <taxon>Cutibacterium</taxon>
    </lineage>
</organism>
<sequence length="826" mass="90014">MFDIPYQVPSRRTFLSLSALSAIAIAASPEMPDAFASPDPDIWSALCEKWTDIITGRNAAKTADPRARAIIAKTDKRVATILTDLASSSSRTTVLLSANLQKEESSFITTTARAISSIACAWATPGSAYHAEPHVLSACIDALKDFCRLRYHPSQDEYGNWWDWEDGASRAIGDVMCILHDALPTDVMAAAAAGIDHFVPDPWYQQPESVKPTAHPTQPVISTGANRMDLTRAVICRSIATGDESKLRHAVQGLPDSWRTVAEGDGFRADGGFIQHSHVPYTGSYGDVLLSGLAMLLPLVAGTRFDITDSAQANLLSQVERGIVPVMYGGQILDCVRGRSISRIDEPAAMHGMSIARSMLLMANAIPAHRAELWRGTVHGWMTRNTFDHLSEPASLRDIDLFDTAANVRPIPESSTPTYFASIDRLVHRTPNWLIAVSNCSNRISWYEYGNSENEWASRTSQGMRYLMLPEDMGQYEDGFWATVDYSAPTGTTVDSTPLKRAVGTAWAERTPDNEWSGGLASGEWSAAASQITSQDSTLKARRLWVGLKDALLELTTDVSTDASKATTVVEHRKVGKTPPELLVDGITITSKTSFDNPHWAHLRGVGGYVFATDVDLTAQLEKRKGSWIDVNPARTVKGFNEAIERNYASLHVTHHNRPVAWAVLPTASRSQTMALAQRPVDNLFIVLSNDRMVQAVRSTGCLLTKDPTVVTTYAFWKPATCAGMTADAPAIIQTQAQGSRVEVIMSEPTQKRPSLTVAIEGVWTVENSSDRISVSRSDKTTTLRINTADLGGQSIRVTLSPALPKPTKPSLRASSYPLGLPHTSS</sequence>
<protein>
    <recommendedName>
        <fullName evidence="6">Hyaluronate lyase HylA</fullName>
        <ecNumber evidence="5">4.2.2.1</ecNumber>
    </recommendedName>
    <alternativeName>
        <fullName evidence="8">Hyaluronate lyase</fullName>
    </alternativeName>
    <alternativeName>
        <fullName evidence="6">Hyaluronidase</fullName>
        <shortName evidence="7">HYase</shortName>
    </alternativeName>
</protein>
<dbReference type="EC" id="4.2.2.1" evidence="5"/>
<dbReference type="EMBL" id="MVCE01000002">
    <property type="protein sequence ID" value="PGF34954.1"/>
    <property type="molecule type" value="Genomic_DNA"/>
</dbReference>
<dbReference type="EMBL" id="NXAP01000002">
    <property type="protein sequence ID" value="REB09072.1"/>
    <property type="molecule type" value="Genomic_DNA"/>
</dbReference>
<dbReference type="RefSeq" id="WP_002517162.1">
    <property type="nucleotide sequence ID" value="NZ_WBMI01000002.1"/>
</dbReference>
<dbReference type="PDB" id="8FYG">
    <property type="method" value="X-ray"/>
    <property type="resolution" value="2.05 A"/>
    <property type="chains" value="A/B=41-805"/>
</dbReference>
<dbReference type="PDBsum" id="8FYG"/>
<dbReference type="SMR" id="A0A2B7ICX0"/>
<dbReference type="OrthoDB" id="6636047at2"/>
<dbReference type="Proteomes" id="UP000226191">
    <property type="component" value="Unassembled WGS sequence"/>
</dbReference>
<dbReference type="GO" id="GO:0005576">
    <property type="term" value="C:extracellular region"/>
    <property type="evidence" value="ECO:0000314"/>
    <property type="project" value="UniProtKB"/>
</dbReference>
<dbReference type="GO" id="GO:0030246">
    <property type="term" value="F:carbohydrate binding"/>
    <property type="evidence" value="ECO:0007669"/>
    <property type="project" value="InterPro"/>
</dbReference>
<dbReference type="GO" id="GO:0030340">
    <property type="term" value="F:hyaluronate lyase activity"/>
    <property type="evidence" value="ECO:0000314"/>
    <property type="project" value="UniProtKB"/>
</dbReference>
<dbReference type="GO" id="GO:0005975">
    <property type="term" value="P:carbohydrate metabolic process"/>
    <property type="evidence" value="ECO:0007669"/>
    <property type="project" value="InterPro"/>
</dbReference>
<dbReference type="CDD" id="cd01083">
    <property type="entry name" value="GAG_Lyase"/>
    <property type="match status" value="1"/>
</dbReference>
<dbReference type="Gene3D" id="2.70.98.10">
    <property type="match status" value="1"/>
</dbReference>
<dbReference type="Gene3D" id="1.50.10.100">
    <property type="entry name" value="Chondroitin AC/alginate lyase"/>
    <property type="match status" value="1"/>
</dbReference>
<dbReference type="Gene3D" id="2.60.220.10">
    <property type="entry name" value="Polysaccharide lyase family 8-like, C-terminal"/>
    <property type="match status" value="1"/>
</dbReference>
<dbReference type="InterPro" id="IPR008929">
    <property type="entry name" value="Chondroitin_lyas"/>
</dbReference>
<dbReference type="InterPro" id="IPR011013">
    <property type="entry name" value="Gal_mutarotase_sf_dom"/>
</dbReference>
<dbReference type="InterPro" id="IPR014718">
    <property type="entry name" value="GH-type_carb-bd"/>
</dbReference>
<dbReference type="InterPro" id="IPR038970">
    <property type="entry name" value="Lyase_8"/>
</dbReference>
<dbReference type="InterPro" id="IPR011071">
    <property type="entry name" value="Lyase_8-like_C"/>
</dbReference>
<dbReference type="InterPro" id="IPR012970">
    <property type="entry name" value="Lyase_8_alpha_N"/>
</dbReference>
<dbReference type="InterPro" id="IPR004103">
    <property type="entry name" value="Lyase_8_C"/>
</dbReference>
<dbReference type="InterPro" id="IPR003159">
    <property type="entry name" value="Lyase_8_central_dom"/>
</dbReference>
<dbReference type="InterPro" id="IPR006311">
    <property type="entry name" value="TAT_signal"/>
</dbReference>
<dbReference type="PANTHER" id="PTHR38481">
    <property type="entry name" value="HYALURONATE LYASE"/>
    <property type="match status" value="1"/>
</dbReference>
<dbReference type="PANTHER" id="PTHR38481:SF1">
    <property type="entry name" value="HYALURONATE LYASE"/>
    <property type="match status" value="1"/>
</dbReference>
<dbReference type="Pfam" id="PF02278">
    <property type="entry name" value="Lyase_8"/>
    <property type="match status" value="1"/>
</dbReference>
<dbReference type="Pfam" id="PF02884">
    <property type="entry name" value="Lyase_8_C"/>
    <property type="match status" value="1"/>
</dbReference>
<dbReference type="Pfam" id="PF08124">
    <property type="entry name" value="Lyase_8_N"/>
    <property type="match status" value="1"/>
</dbReference>
<dbReference type="SUPFAM" id="SSF48230">
    <property type="entry name" value="Chondroitin AC/alginate lyase"/>
    <property type="match status" value="1"/>
</dbReference>
<dbReference type="SUPFAM" id="SSF74650">
    <property type="entry name" value="Galactose mutarotase-like"/>
    <property type="match status" value="1"/>
</dbReference>
<dbReference type="SUPFAM" id="SSF49863">
    <property type="entry name" value="Hyaluronate lyase-like, C-terminal domain"/>
    <property type="match status" value="1"/>
</dbReference>
<dbReference type="PROSITE" id="PS51318">
    <property type="entry name" value="TAT"/>
    <property type="match status" value="1"/>
</dbReference>
<reference evidence="8 10" key="1">
    <citation type="submission" date="2017-02" db="EMBL/GenBank/DDBJ databases">
        <title>Prevalence of linear plasmids in Cutibacterium acnes isolates obtained from cancerous prostatic tissue.</title>
        <authorList>
            <person name="Davidsson S."/>
            <person name="Bruggemann H."/>
        </authorList>
    </citation>
    <scope>NUCLEOTIDE SEQUENCE [LARGE SCALE GENOMIC DNA]</scope>
    <source>
        <strain evidence="8 10">11-78</strain>
    </source>
</reference>
<reference evidence="9" key="2">
    <citation type="submission" date="2017-09" db="EMBL/GenBank/DDBJ databases">
        <authorList>
            <person name="Bumgarner R.E."/>
        </authorList>
    </citation>
    <scope>NUCLEOTIDE SEQUENCE [LARGE SCALE GENOMIC DNA]</scope>
    <source>
        <strain evidence="9">P15-231</strain>
    </source>
</reference>
<reference evidence="11" key="3">
    <citation type="journal article" date="2023" name="Nat. Commun.">
        <title>Functional divergence of a bacterial enzyme promotes healthy or acneic skin.</title>
        <authorList>
            <person name="Hajam I.A."/>
            <person name="Katiki M."/>
            <person name="McNally R."/>
            <person name="Lazaro-Diez M."/>
            <person name="Kolar S."/>
            <person name="Chatterjee A."/>
            <person name="Gonzalez C."/>
            <person name="Paulchakrabarti M."/>
            <person name="Choudhury B."/>
            <person name="Caldera J.R."/>
            <person name="Desmond T."/>
            <person name="Tsai C.M."/>
            <person name="Du X."/>
            <person name="Li H."/>
            <person name="Murali R."/>
            <person name="Liu G.Y."/>
        </authorList>
    </citation>
    <scope>X-RAY CRYSTALLOGRAPHY (2.05 ANGSTROMS) OF 41-805 OF MUTANT PHE-285</scope>
    <scope>FUNCTION</scope>
    <scope>CATALYTIC ACTIVITY</scope>
    <scope>SUBCELLULAR LOCATION</scope>
    <scope>DISRUPTION PHENOTYPE</scope>
    <scope>BIOTECHNOLOGY</scope>
    <scope>ACTIVE SITE</scope>
    <scope>MUTAGENESIS OF SER-116; SER-284; TYR-285; ASP-345; GLU-346; ARG-397; ASN-442 AND SER-452</scope>
    <source>
        <strain evidence="6">HL043PA1</strain>
        <strain evidence="6">HL043PA2</strain>
    </source>
</reference>
<keyword id="KW-0002">3D-structure</keyword>
<keyword id="KW-0456">Lyase</keyword>
<keyword id="KW-0964">Secreted</keyword>
<keyword id="KW-0732">Signal</keyword>
<keyword id="KW-0843">Virulence</keyword>